<protein>
    <recommendedName>
        <fullName evidence="5">Ent-kaurene synthase TSP4, chloroplastic</fullName>
        <ecNumber evidence="4">4.2.3.19</ecNumber>
    </recommendedName>
    <alternativeName>
        <fullName evidence="5">Terpene synthase 4</fullName>
        <shortName evidence="5">VacTPS4</shortName>
    </alternativeName>
</protein>
<dbReference type="EC" id="4.2.3.19" evidence="4"/>
<dbReference type="EMBL" id="MG696751">
    <property type="protein sequence ID" value="AUT77123.1"/>
    <property type="molecule type" value="mRNA"/>
</dbReference>
<dbReference type="SMR" id="A0A2K9RFY0"/>
<dbReference type="UniPathway" id="UPA00390"/>
<dbReference type="GO" id="GO:0031969">
    <property type="term" value="C:chloroplast membrane"/>
    <property type="evidence" value="ECO:0007669"/>
    <property type="project" value="UniProtKB-SubCell"/>
</dbReference>
<dbReference type="GO" id="GO:0009899">
    <property type="term" value="F:ent-kaurene synthase activity"/>
    <property type="evidence" value="ECO:0000314"/>
    <property type="project" value="UniProtKB"/>
</dbReference>
<dbReference type="GO" id="GO:0000287">
    <property type="term" value="F:magnesium ion binding"/>
    <property type="evidence" value="ECO:0007669"/>
    <property type="project" value="InterPro"/>
</dbReference>
<dbReference type="GO" id="GO:0009686">
    <property type="term" value="P:gibberellin biosynthetic process"/>
    <property type="evidence" value="ECO:0007669"/>
    <property type="project" value="UniProtKB-UniPathway"/>
</dbReference>
<dbReference type="CDD" id="cd00684">
    <property type="entry name" value="Terpene_cyclase_plant_C1"/>
    <property type="match status" value="1"/>
</dbReference>
<dbReference type="FunFam" id="1.50.10.160:FF:000002">
    <property type="entry name" value="cis-abienol synthase, chloroplastic"/>
    <property type="match status" value="1"/>
</dbReference>
<dbReference type="FunFam" id="1.50.10.130:FF:000002">
    <property type="entry name" value="Ent-copalyl diphosphate synthase, chloroplastic"/>
    <property type="match status" value="1"/>
</dbReference>
<dbReference type="FunFam" id="1.10.600.10:FF:000005">
    <property type="entry name" value="Ent-kaur-16-ene synthase, chloroplastic"/>
    <property type="match status" value="1"/>
</dbReference>
<dbReference type="Gene3D" id="1.50.10.160">
    <property type="match status" value="1"/>
</dbReference>
<dbReference type="Gene3D" id="1.10.600.10">
    <property type="entry name" value="Farnesyl Diphosphate Synthase"/>
    <property type="match status" value="1"/>
</dbReference>
<dbReference type="Gene3D" id="1.50.10.130">
    <property type="entry name" value="Terpene synthase, N-terminal domain"/>
    <property type="match status" value="1"/>
</dbReference>
<dbReference type="InterPro" id="IPR008949">
    <property type="entry name" value="Isoprenoid_synthase_dom_sf"/>
</dbReference>
<dbReference type="InterPro" id="IPR044814">
    <property type="entry name" value="Terpene_cyclase_plant_C1"/>
</dbReference>
<dbReference type="InterPro" id="IPR001906">
    <property type="entry name" value="Terpene_synth_N"/>
</dbReference>
<dbReference type="InterPro" id="IPR036965">
    <property type="entry name" value="Terpene_synth_N_sf"/>
</dbReference>
<dbReference type="InterPro" id="IPR050148">
    <property type="entry name" value="Terpene_synthase-like"/>
</dbReference>
<dbReference type="InterPro" id="IPR005630">
    <property type="entry name" value="Terpene_synthase_metal-bd"/>
</dbReference>
<dbReference type="InterPro" id="IPR008930">
    <property type="entry name" value="Terpenoid_cyclase/PrenylTrfase"/>
</dbReference>
<dbReference type="PANTHER" id="PTHR31739">
    <property type="entry name" value="ENT-COPALYL DIPHOSPHATE SYNTHASE, CHLOROPLASTIC"/>
    <property type="match status" value="1"/>
</dbReference>
<dbReference type="PANTHER" id="PTHR31739:SF3">
    <property type="entry name" value="ENT-KAUR-16-ENE SYNTHASE, CHLOROPLASTIC"/>
    <property type="match status" value="1"/>
</dbReference>
<dbReference type="Pfam" id="PF01397">
    <property type="entry name" value="Terpene_synth"/>
    <property type="match status" value="1"/>
</dbReference>
<dbReference type="Pfam" id="PF03936">
    <property type="entry name" value="Terpene_synth_C"/>
    <property type="match status" value="1"/>
</dbReference>
<dbReference type="SFLD" id="SFLDG01014">
    <property type="entry name" value="Terpene_Cyclase_Like_1_N-term"/>
    <property type="match status" value="1"/>
</dbReference>
<dbReference type="SUPFAM" id="SSF48239">
    <property type="entry name" value="Terpenoid cyclases/Protein prenyltransferases"/>
    <property type="match status" value="2"/>
</dbReference>
<dbReference type="SUPFAM" id="SSF48576">
    <property type="entry name" value="Terpenoid synthases"/>
    <property type="match status" value="1"/>
</dbReference>
<keyword id="KW-0150">Chloroplast</keyword>
<keyword id="KW-0456">Lyase</keyword>
<keyword id="KW-0460">Magnesium</keyword>
<keyword id="KW-0472">Membrane</keyword>
<keyword id="KW-0479">Metal-binding</keyword>
<keyword id="KW-0934">Plastid</keyword>
<keyword id="KW-0812">Transmembrane</keyword>
<keyword id="KW-1133">Transmembrane helix</keyword>
<accession>A0A2K9RFY0</accession>
<comment type="function">
    <text evidence="4 7 8 9">Involved in the biosynthesis of labdane-type diterpenoid including cleroda-dienols, and peregrinol lactones and furan derivatives, dopaminergic diterpenoids that can bind to dopamine receptors in the human pituitary gland, have probably ability to lower prolactin levels, and are used to treat menstrual cycle disorders (e.g. premenstrual syndrome and mastodynia) (Probable). Terpene synthase that produces ent-kaurene from ent-copalyl diphosphate (PubMed:29315936).</text>
</comment>
<comment type="catalytic activity">
    <reaction evidence="4">
        <text>ent-copalyl diphosphate = ent-kaur-16-ene + diphosphate</text>
        <dbReference type="Rhea" id="RHEA:22220"/>
        <dbReference type="ChEBI" id="CHEBI:15415"/>
        <dbReference type="ChEBI" id="CHEBI:33019"/>
        <dbReference type="ChEBI" id="CHEBI:58553"/>
        <dbReference type="EC" id="4.2.3.19"/>
    </reaction>
    <physiologicalReaction direction="left-to-right" evidence="4">
        <dbReference type="Rhea" id="RHEA:22221"/>
    </physiologicalReaction>
</comment>
<comment type="cofactor">
    <cofactor evidence="2">
        <name>Mg(2+)</name>
        <dbReference type="ChEBI" id="CHEBI:18420"/>
    </cofactor>
    <text evidence="2">Binds 3 Mg(2+) ions per subunit.</text>
</comment>
<comment type="pathway">
    <text evidence="8 9">Plant hormone biosynthesis; gibberellin biosynthesis.</text>
</comment>
<comment type="subcellular location">
    <subcellularLocation>
        <location evidence="8">Plastid</location>
        <location evidence="8">Chloroplast membrane</location>
        <topology evidence="3">Single-pass membrane protein</topology>
    </subcellularLocation>
</comment>
<comment type="tissue specificity">
    <text evidence="4">Expressed in leaves and fruits, including trichomes.</text>
</comment>
<comment type="domain">
    <text evidence="1">The Asp-Asp-Xaa-Xaa-Asp/Glu (DDXXD/E) motif is important for the catalytic activity, presumably through binding to Mg(2+).</text>
</comment>
<comment type="similarity">
    <text evidence="6">Belongs to the terpene synthase family.</text>
</comment>
<reference key="1">
    <citation type="journal article" date="2018" name="Plant J.">
        <title>Biosynthesis of bioactive diterpenoids in the medicinal plant Vitex agnus-castus.</title>
        <authorList>
            <person name="Heskes A.M."/>
            <person name="Sundram T.C.M."/>
            <person name="Boughton B.A."/>
            <person name="Jensen N.B."/>
            <person name="Hansen N.L."/>
            <person name="Crocoll C."/>
            <person name="Cozzi F."/>
            <person name="Rasmussen S."/>
            <person name="Hamberger B."/>
            <person name="Hamberger B."/>
            <person name="Staerk D."/>
            <person name="Moeller B.L."/>
            <person name="Pateraki I."/>
        </authorList>
    </citation>
    <scope>NUCLEOTIDE SEQUENCE [MRNA]</scope>
    <scope>FUNCTION</scope>
    <scope>CATALYTIC ACTIVITY</scope>
    <scope>PATHWAY</scope>
    <scope>TISSUE SPECIFICITY</scope>
    <source>
        <tissue>Fruit</tissue>
        <tissue>Leaf</tissue>
        <tissue>Trichome gland</tissue>
    </source>
</reference>
<reference key="2">
    <citation type="journal article" date="2003" name="Phytomedicine">
        <title>Chaste tree (Vitex agnus-castus)--pharmacology and clinical indications.</title>
        <authorList>
            <person name="Wuttke W."/>
            <person name="Jarry H."/>
            <person name="Christoffel V."/>
            <person name="Spengler B."/>
            <person name="Seidlova-Wuttke D."/>
        </authorList>
    </citation>
    <scope>REVIEW ON MENSTRUAL CYCLE DISORDERS</scope>
</reference>
<reference key="3">
    <citation type="journal article" date="2019" name="Nat. Prod. Rep.">
        <title>Non-volatile natural products in plant glandular trichomes: chemistry, biological activities and biosynthesis.</title>
        <authorList>
            <person name="Liu Y."/>
            <person name="Jing S.-X."/>
            <person name="Luo S.-H."/>
            <person name="Li S.-H."/>
        </authorList>
    </citation>
    <scope>PATHWAY</scope>
    <scope>REVIEW</scope>
</reference>
<gene>
    <name evidence="5" type="primary">TPS4</name>
</gene>
<evidence type="ECO:0000250" key="1">
    <source>
        <dbReference type="UniProtKB" id="G8GJ94"/>
    </source>
</evidence>
<evidence type="ECO:0000250" key="2">
    <source>
        <dbReference type="UniProtKB" id="Q40577"/>
    </source>
</evidence>
<evidence type="ECO:0000255" key="3"/>
<evidence type="ECO:0000269" key="4">
    <source>
    </source>
</evidence>
<evidence type="ECO:0000303" key="5">
    <source>
    </source>
</evidence>
<evidence type="ECO:0000305" key="6"/>
<evidence type="ECO:0000305" key="7">
    <source>
    </source>
</evidence>
<evidence type="ECO:0000305" key="8">
    <source>
    </source>
</evidence>
<evidence type="ECO:0000305" key="9">
    <source>
    </source>
</evidence>
<sequence length="789" mass="90215">MSLQLSNSLFFARKESHFRCFSHVSASLDTGVRRVTSAKIASTCFEETKERIADLIHKAELSVSTYDTAWVAMVPSPNSSQEPCFPDCLSWLLQNQCCDGSWACPHHHPLLKKDVLCSTLACVLALKKWGVGEEKINRGVHFIEHNFASAMEKCQISPMGFDIIFPAMLDYARDLLLNLRLEPTMLNDLIYKRGLELKRNQNHSAEREAYLAYVAEGMGKLQDLGSVMKHQRRNGSLFNSPSTTAAAFIAFPNSRCLTYLRSALKKFGSAVPAVYPLDIYLQLCTVDNLERLGISRYFQKEIQGVLDETYRCWLQGNEEIFMDAPTCALAFRVLRKNGYNVTSDPITKLLEECFSSSFCGNIKDINTTLGLYRASEFILYPDERDLEKQNLMLKNLLEQELSSDFIHSSQLGRNIDAEVKHALEYPFYADLDRIVNRRNIEHYNFDNTRILKTSYCSPNFGNKDFLFLSVKDYNECQAIHREELRELERWVIENRLDELRFARQKCAYCYFSAAATLFAPELSNARMSWAKNGVLTTVVDDFFDLGGSVEELKNLIQLVELWDVDVSTECSSQNVQIIFSALKCTICDIGDKGSKLQERSITNHIIDIWLDLLYSMMKETEWARDKYIPTMDEYISNAYVSFALGPIVLPALYLVGPKLSEEMVHHSEYHNLYKLMSTCGRLLNDIRGCERELKEGKLNAIPLYIINNGGEITKEAAASEMKSLIETHRRELLRLVLEGKNSVLPKSCKELFWHMSKVLHLFYSKDDGFTSQDLIKVVKAVIYEPIVLK</sequence>
<feature type="chain" id="PRO_0000449310" description="Ent-kaurene synthase TSP4, chloroplastic">
    <location>
        <begin position="1"/>
        <end position="789"/>
    </location>
</feature>
<feature type="transmembrane region" description="Helical" evidence="3">
    <location>
        <begin position="638"/>
        <end position="656"/>
    </location>
</feature>
<feature type="short sequence motif" description="DDXXD motif" evidence="1">
    <location>
        <begin position="540"/>
        <end position="544"/>
    </location>
</feature>
<feature type="binding site" evidence="2">
    <location>
        <position position="540"/>
    </location>
    <ligand>
        <name>Mg(2+)</name>
        <dbReference type="ChEBI" id="CHEBI:18420"/>
        <label>1</label>
    </ligand>
</feature>
<feature type="binding site" evidence="2">
    <location>
        <position position="540"/>
    </location>
    <ligand>
        <name>Mg(2+)</name>
        <dbReference type="ChEBI" id="CHEBI:18420"/>
        <label>2</label>
    </ligand>
</feature>
<feature type="binding site" evidence="2">
    <location>
        <position position="544"/>
    </location>
    <ligand>
        <name>Mg(2+)</name>
        <dbReference type="ChEBI" id="CHEBI:18420"/>
        <label>1</label>
    </ligand>
</feature>
<feature type="binding site" evidence="2">
    <location>
        <position position="544"/>
    </location>
    <ligand>
        <name>Mg(2+)</name>
        <dbReference type="ChEBI" id="CHEBI:18420"/>
        <label>2</label>
    </ligand>
</feature>
<feature type="binding site" evidence="2">
    <location>
        <position position="684"/>
    </location>
    <ligand>
        <name>Mg(2+)</name>
        <dbReference type="ChEBI" id="CHEBI:18420"/>
        <label>3</label>
    </ligand>
</feature>
<feature type="binding site" evidence="2">
    <location>
        <position position="687"/>
    </location>
    <ligand>
        <name>Mg(2+)</name>
        <dbReference type="ChEBI" id="CHEBI:18420"/>
        <label>3</label>
    </ligand>
</feature>
<feature type="binding site" evidence="2">
    <location>
        <position position="692"/>
    </location>
    <ligand>
        <name>Mg(2+)</name>
        <dbReference type="ChEBI" id="CHEBI:18420"/>
        <label>3</label>
    </ligand>
</feature>
<proteinExistence type="evidence at protein level"/>
<organism>
    <name type="scientific">Vitex agnus-castus</name>
    <name type="common">Chaste tree</name>
    <dbReference type="NCBI Taxonomy" id="54477"/>
    <lineage>
        <taxon>Eukaryota</taxon>
        <taxon>Viridiplantae</taxon>
        <taxon>Streptophyta</taxon>
        <taxon>Embryophyta</taxon>
        <taxon>Tracheophyta</taxon>
        <taxon>Spermatophyta</taxon>
        <taxon>Magnoliopsida</taxon>
        <taxon>eudicotyledons</taxon>
        <taxon>Gunneridae</taxon>
        <taxon>Pentapetalae</taxon>
        <taxon>asterids</taxon>
        <taxon>lamiids</taxon>
        <taxon>Lamiales</taxon>
        <taxon>Lamiaceae</taxon>
        <taxon>Viticoideae</taxon>
        <taxon>Vitex</taxon>
    </lineage>
</organism>
<name>TPS4_VITAC</name>